<dbReference type="EMBL" id="AB088365">
    <property type="protein sequence ID" value="BAC05679.1"/>
    <property type="molecule type" value="mRNA"/>
</dbReference>
<dbReference type="RefSeq" id="NP_001075229.3">
    <property type="nucleotide sequence ID" value="NM_001081760.3"/>
</dbReference>
<dbReference type="RefSeq" id="XP_023507422.2">
    <property type="nucleotide sequence ID" value="XM_023651654.2"/>
</dbReference>
<dbReference type="SMR" id="Q8MJV1"/>
<dbReference type="STRING" id="9796.ENSECAP00000025956"/>
<dbReference type="PaxDb" id="9796-ENSECAP00000025956"/>
<dbReference type="ABCD" id="Q8MJV1">
    <property type="antibodies" value="1 sequenced antibody"/>
</dbReference>
<dbReference type="GeneID" id="791236"/>
<dbReference type="KEGG" id="ecb:791236"/>
<dbReference type="CTD" id="4620"/>
<dbReference type="InParanoid" id="Q8MJV1"/>
<dbReference type="OrthoDB" id="312459at2759"/>
<dbReference type="Proteomes" id="UP000002281">
    <property type="component" value="Unplaced"/>
</dbReference>
<dbReference type="GO" id="GO:0005737">
    <property type="term" value="C:cytoplasm"/>
    <property type="evidence" value="ECO:0000318"/>
    <property type="project" value="GO_Central"/>
</dbReference>
<dbReference type="GO" id="GO:0030016">
    <property type="term" value="C:myofibril"/>
    <property type="evidence" value="ECO:0007669"/>
    <property type="project" value="UniProtKB-SubCell"/>
</dbReference>
<dbReference type="GO" id="GO:0032982">
    <property type="term" value="C:myosin filament"/>
    <property type="evidence" value="ECO:0000318"/>
    <property type="project" value="GO_Central"/>
</dbReference>
<dbReference type="GO" id="GO:0016460">
    <property type="term" value="C:myosin II complex"/>
    <property type="evidence" value="ECO:0000318"/>
    <property type="project" value="GO_Central"/>
</dbReference>
<dbReference type="GO" id="GO:0051015">
    <property type="term" value="F:actin filament binding"/>
    <property type="evidence" value="ECO:0000318"/>
    <property type="project" value="GO_Central"/>
</dbReference>
<dbReference type="GO" id="GO:0005524">
    <property type="term" value="F:ATP binding"/>
    <property type="evidence" value="ECO:0007669"/>
    <property type="project" value="UniProtKB-KW"/>
</dbReference>
<dbReference type="GO" id="GO:0005516">
    <property type="term" value="F:calmodulin binding"/>
    <property type="evidence" value="ECO:0007669"/>
    <property type="project" value="UniProtKB-KW"/>
</dbReference>
<dbReference type="GO" id="GO:0000146">
    <property type="term" value="F:microfilament motor activity"/>
    <property type="evidence" value="ECO:0000318"/>
    <property type="project" value="GO_Central"/>
</dbReference>
<dbReference type="GO" id="GO:0006936">
    <property type="term" value="P:muscle contraction"/>
    <property type="evidence" value="ECO:0000318"/>
    <property type="project" value="GO_Central"/>
</dbReference>
<dbReference type="FunFam" id="1.10.10.820:FF:000001">
    <property type="entry name" value="Myosin heavy chain"/>
    <property type="match status" value="1"/>
</dbReference>
<dbReference type="FunFam" id="1.20.5.340:FF:000002">
    <property type="entry name" value="Myosin heavy chain"/>
    <property type="match status" value="1"/>
</dbReference>
<dbReference type="FunFam" id="1.20.5.340:FF:000003">
    <property type="entry name" value="Myosin heavy chain"/>
    <property type="match status" value="1"/>
</dbReference>
<dbReference type="FunFam" id="1.20.5.340:FF:000004">
    <property type="entry name" value="Myosin heavy chain"/>
    <property type="match status" value="1"/>
</dbReference>
<dbReference type="FunFam" id="1.20.5.340:FF:000006">
    <property type="entry name" value="Myosin heavy chain"/>
    <property type="match status" value="1"/>
</dbReference>
<dbReference type="FunFam" id="1.20.5.340:FF:000013">
    <property type="entry name" value="Myosin heavy chain"/>
    <property type="match status" value="1"/>
</dbReference>
<dbReference type="FunFam" id="1.20.5.370:FF:000001">
    <property type="entry name" value="Myosin heavy chain"/>
    <property type="match status" value="1"/>
</dbReference>
<dbReference type="FunFam" id="1.20.5.370:FF:000002">
    <property type="entry name" value="Myosin heavy chain"/>
    <property type="match status" value="1"/>
</dbReference>
<dbReference type="FunFam" id="1.20.5.370:FF:000003">
    <property type="entry name" value="Myosin heavy chain"/>
    <property type="match status" value="1"/>
</dbReference>
<dbReference type="FunFam" id="1.20.5.370:FF:000007">
    <property type="entry name" value="Myosin heavy chain"/>
    <property type="match status" value="1"/>
</dbReference>
<dbReference type="FunFam" id="1.20.5.370:FF:000008">
    <property type="entry name" value="Myosin heavy chain"/>
    <property type="match status" value="1"/>
</dbReference>
<dbReference type="FunFam" id="1.20.5.4820:FF:000001">
    <property type="entry name" value="Myosin heavy chain"/>
    <property type="match status" value="1"/>
</dbReference>
<dbReference type="FunFam" id="1.20.58.530:FF:000001">
    <property type="entry name" value="Myosin heavy chain"/>
    <property type="match status" value="1"/>
</dbReference>
<dbReference type="FunFam" id="2.30.30.360:FF:000001">
    <property type="entry name" value="Myosin heavy chain"/>
    <property type="match status" value="1"/>
</dbReference>
<dbReference type="FunFam" id="3.40.850.10:FF:000024">
    <property type="entry name" value="Myosin heavy chain, isoform J"/>
    <property type="match status" value="1"/>
</dbReference>
<dbReference type="FunFam" id="1.20.120.720:FF:000001">
    <property type="entry name" value="Myosin heavy chain, muscle"/>
    <property type="match status" value="1"/>
</dbReference>
<dbReference type="Gene3D" id="1.10.10.820">
    <property type="match status" value="1"/>
</dbReference>
<dbReference type="Gene3D" id="1.20.5.340">
    <property type="match status" value="5"/>
</dbReference>
<dbReference type="Gene3D" id="1.20.5.370">
    <property type="match status" value="4"/>
</dbReference>
<dbReference type="Gene3D" id="1.20.5.4820">
    <property type="match status" value="1"/>
</dbReference>
<dbReference type="Gene3D" id="1.20.58.530">
    <property type="match status" value="1"/>
</dbReference>
<dbReference type="Gene3D" id="6.10.250.2420">
    <property type="match status" value="1"/>
</dbReference>
<dbReference type="Gene3D" id="3.40.850.10">
    <property type="entry name" value="Kinesin motor domain"/>
    <property type="match status" value="1"/>
</dbReference>
<dbReference type="Gene3D" id="2.30.30.360">
    <property type="entry name" value="Myosin S1 fragment, N-terminal"/>
    <property type="match status" value="1"/>
</dbReference>
<dbReference type="Gene3D" id="1.20.120.720">
    <property type="entry name" value="Myosin VI head, motor domain, U50 subdomain"/>
    <property type="match status" value="1"/>
</dbReference>
<dbReference type="InterPro" id="IPR000048">
    <property type="entry name" value="IQ_motif_EF-hand-BS"/>
</dbReference>
<dbReference type="InterPro" id="IPR036961">
    <property type="entry name" value="Kinesin_motor_dom_sf"/>
</dbReference>
<dbReference type="InterPro" id="IPR001609">
    <property type="entry name" value="Myosin_head_motor_dom-like"/>
</dbReference>
<dbReference type="InterPro" id="IPR004009">
    <property type="entry name" value="Myosin_N"/>
</dbReference>
<dbReference type="InterPro" id="IPR008989">
    <property type="entry name" value="Myosin_S1_N"/>
</dbReference>
<dbReference type="InterPro" id="IPR002928">
    <property type="entry name" value="Myosin_tail"/>
</dbReference>
<dbReference type="InterPro" id="IPR027417">
    <property type="entry name" value="P-loop_NTPase"/>
</dbReference>
<dbReference type="InterPro" id="IPR014751">
    <property type="entry name" value="XRCC4-like_C"/>
</dbReference>
<dbReference type="PANTHER" id="PTHR45615">
    <property type="entry name" value="MYOSIN HEAVY CHAIN, NON-MUSCLE"/>
    <property type="match status" value="1"/>
</dbReference>
<dbReference type="PANTHER" id="PTHR45615:SF39">
    <property type="entry name" value="MYOSIN-2"/>
    <property type="match status" value="1"/>
</dbReference>
<dbReference type="Pfam" id="PF00063">
    <property type="entry name" value="Myosin_head"/>
    <property type="match status" value="1"/>
</dbReference>
<dbReference type="Pfam" id="PF02736">
    <property type="entry name" value="Myosin_N"/>
    <property type="match status" value="1"/>
</dbReference>
<dbReference type="Pfam" id="PF01576">
    <property type="entry name" value="Myosin_tail_1"/>
    <property type="match status" value="1"/>
</dbReference>
<dbReference type="PRINTS" id="PR00193">
    <property type="entry name" value="MYOSINHEAVY"/>
</dbReference>
<dbReference type="SMART" id="SM00015">
    <property type="entry name" value="IQ"/>
    <property type="match status" value="2"/>
</dbReference>
<dbReference type="SMART" id="SM00242">
    <property type="entry name" value="MYSc"/>
    <property type="match status" value="1"/>
</dbReference>
<dbReference type="SUPFAM" id="SSF90257">
    <property type="entry name" value="Myosin rod fragments"/>
    <property type="match status" value="5"/>
</dbReference>
<dbReference type="SUPFAM" id="SSF52540">
    <property type="entry name" value="P-loop containing nucleoside triphosphate hydrolases"/>
    <property type="match status" value="1"/>
</dbReference>
<dbReference type="SUPFAM" id="SSF57997">
    <property type="entry name" value="Tropomyosin"/>
    <property type="match status" value="1"/>
</dbReference>
<dbReference type="PROSITE" id="PS50096">
    <property type="entry name" value="IQ"/>
    <property type="match status" value="1"/>
</dbReference>
<dbReference type="PROSITE" id="PS51456">
    <property type="entry name" value="MYOSIN_MOTOR"/>
    <property type="match status" value="1"/>
</dbReference>
<dbReference type="PROSITE" id="PS51844">
    <property type="entry name" value="SH3_LIKE"/>
    <property type="match status" value="1"/>
</dbReference>
<proteinExistence type="evidence at transcript level"/>
<sequence length="1937" mass="222748">MSSDQEMAIFGEAAPYLRKSEKERIEAQNRPFDAKTSVFVAEPKESFVKGTIQSREGGKVTVKTDAGATLTVKEDQVFPMNPPKYDKIEDMAMMTHLHEPAVLYNLKERYAAWMIYTYSGLFCVTVNPYKWLPVYNPEVVTAYRGKKRQEAPPHIFSISDNAYQFMLTDRENQSILITGESGAGKTVNTKRVIQYFATIAVTGEKKKEEPGKMQGTLEDQIISANPLLEAFGNAKTVRNDNSSRFGKFIRIHFGTTGKLASADIETYLLEKSRVTFQLKAERSYHIFYQITSNRKPELIEMLLITTNPYDYPYVSQGEISVASIDDQEELIATDSAIDILGFTNDEKVSIYKLTGAVMHYGNLKFKQKQREEQAEPDGTEVADKAAYLQGLNSADLLKALCYPRVKVGNEFVTKGQTVEQVTNAVGALAKAVYDKMFLWMVARINQQLDTKQPRQYFIGVLDIAGFEIFDFNSLEQLCINFTNEKLQQFFNHHMFVLEQEEYKKEGIEWTFIDFGMDLAACIELIEKPMGIFSILEEECMFPKATDTSFKNKLYEQHLGKSSNFQKPKVVKGKAEAHFSLIHYAGVVDYNITGWLDKNKDPLNETVVGLYQKSSVKTLALLFSGAQTADAEAGGVKKGGKKKGSSFQTVSALFRENLNKLMTNLRSTHPHFVRCIIPNETKTPGAMEHELVLHQLRCNGVLEGIRICRKGFPSRILYADFKQRYKVLNASAIPEGQFIDSKKASEKLLASIDIDHTQYKFGHTKVFFKAGLLGLLEEMRDDKLAQIITRTQARCRGFLARVEYQKMVERRESIFCIQYNIRAFMNVKHWPWMKLFFRIKPLLKSAETEKEMATMKEEFQKTKDELAKSEAKRKELEEKMVSLLKEKNDLQLQVQSEAEGLADAEERCDQLIKTKIQLEAKIKEVTERAEDEEEINAELTAKKRKLEDECSELKKDIDDLELTLAKVEKEKHATENKVKNLTEEMAGLDETIAKLTKEKKALQEAHQQTLDDLQAEEDKVNTLTKAKTKLEQQVDDLEGSLEQEKKLRMDLERAKRKLEGDLKLAQESIMDIENEKQQLDEKLKKKEFEIGNLQSKIEDEQALGIQLQKKIKELQARIEELEEEIEAERASRAKAEKQRSDLSRELEEISERLEEAGGATSAQIEMNKKREAEFQKMRRDLEEATLQHEATAAALRKKHADSVAELGEQIDNLQRVKQKLEKEKSEMKMEIDDLASNVETVSKAKGNLEKMCRTLEDQVSELKSKEEEQQRLINDLTAQRGRLQTEAGEFSRQLDEKEALVSQLSRGKQAFTQQIEELKRQLEEEIKAKNALAHALQSSRHDCDLLREQYEEEQESKAELQRALSKANSEVAQWRTKYETDAIQRTEELEEAKKKLAQRLQAAEEHVEAVNAKCASLEKTKQRLQNEVEDLMLDVERTNAACAALDKKQRNFDKILAEWKQKYEETHAELEASQKEARSLGTELFKMKNAYEESLDQLETLKRENKNLQQEISDLTEQIAEGGKRIHELEKIKKQVEQEKSELQAALEEAEASLEHEEGKILRIQLELNQVKSEIDRKIAEKDEEIDQLKRNHVRVVETMQTMLDAEIRSRNDAIRIKKKMEGDLNEMEIQLNHANRMAAEALRNYRNTQGILKDTQLHLDDALRGQEDLKEQLAMVERRANLLQAEIEELRATLEQTERSRKIAEQELLDASERVQLLHTQNTSLINTKKKLETDISQLQGEMEDILQEARNAEEKAKKAITDAAMMAEELKKEQDTSAHLERMKKNLEQTVKDLQQRLDEAEQLALKGGKKQIQKLEARVRELEGEVESEQKRSAEAIKGLRKHERRVKELTYQTEEDRKNILRLQDLVDKLQAKVKSYKRQAEEAEEQSNTNLSKFRKLQHELEEAEERADIAESQVNKLRVKSREVHTKIISEE</sequence>
<comment type="function">
    <text evidence="3">Myosins are actin-based motor molecules with ATPase activity essential for muscle contraction.</text>
</comment>
<comment type="subunit">
    <text evidence="6 12">Muscle myosin is a hexameric protein that consists of 2 heavy chain subunits (MHC), 2 alkali light chain subunits (MLC) and 2 regulatory light chain subunits (MLC-2) (Probable). Interacts with GCSAM (By similarity).</text>
</comment>
<comment type="subcellular location">
    <subcellularLocation>
        <location evidence="2">Cytoplasm</location>
        <location evidence="2">Myofibril</location>
    </subcellularLocation>
    <text evidence="1">Thick filaments of the myofibrils.</text>
</comment>
<comment type="domain">
    <text>The rodlike tail sequence is highly repetitive, showing cycles of a 28-residue repeat pattern composed of 4 heptapeptides, characteristic for alpha-helical coiled coils.</text>
</comment>
<comment type="domain">
    <text evidence="12">Limited proteolysis of myosin heavy chain produces 1 light meromyosin (LMM) and 1 heavy meromyosin (HMM). HMM can be further cleaved into 2 globular subfragments (S1) and 1 rod-shaped subfragment (S2).</text>
</comment>
<comment type="similarity">
    <text evidence="12">Belongs to the TRAFAC class myosin-kinesin ATPase superfamily. Myosin family.</text>
</comment>
<comment type="caution">
    <text evidence="12">Represents a conventional myosin. This protein should not be confused with the unconventional myosin-2 (MYO2) found in fungi.</text>
</comment>
<protein>
    <recommendedName>
        <fullName>Myosin-2</fullName>
    </recommendedName>
    <alternativeName>
        <fullName>Myosin heavy chain 2</fullName>
    </alternativeName>
    <alternativeName>
        <fullName>Myosin heavy chain 2a</fullName>
        <shortName>MyHC-2a</shortName>
    </alternativeName>
    <alternativeName>
        <fullName>Myosin heavy chain, skeletal muscle, adult 2</fullName>
    </alternativeName>
</protein>
<evidence type="ECO:0000250" key="1"/>
<evidence type="ECO:0000250" key="2">
    <source>
        <dbReference type="UniProtKB" id="G3UW82"/>
    </source>
</evidence>
<evidence type="ECO:0000250" key="3">
    <source>
        <dbReference type="UniProtKB" id="P12883"/>
    </source>
</evidence>
<evidence type="ECO:0000250" key="4">
    <source>
        <dbReference type="UniProtKB" id="Q28641"/>
    </source>
</evidence>
<evidence type="ECO:0000250" key="5">
    <source>
        <dbReference type="UniProtKB" id="Q29RW1"/>
    </source>
</evidence>
<evidence type="ECO:0000250" key="6">
    <source>
        <dbReference type="UniProtKB" id="Q9UKX2"/>
    </source>
</evidence>
<evidence type="ECO:0000255" key="7"/>
<evidence type="ECO:0000255" key="8">
    <source>
        <dbReference type="PROSITE-ProRule" id="PRU00116"/>
    </source>
</evidence>
<evidence type="ECO:0000255" key="9">
    <source>
        <dbReference type="PROSITE-ProRule" id="PRU00782"/>
    </source>
</evidence>
<evidence type="ECO:0000255" key="10">
    <source>
        <dbReference type="PROSITE-ProRule" id="PRU01190"/>
    </source>
</evidence>
<evidence type="ECO:0000256" key="11">
    <source>
        <dbReference type="SAM" id="MobiDB-lite"/>
    </source>
</evidence>
<evidence type="ECO:0000305" key="12"/>
<organism>
    <name type="scientific">Equus caballus</name>
    <name type="common">Horse</name>
    <dbReference type="NCBI Taxonomy" id="9796"/>
    <lineage>
        <taxon>Eukaryota</taxon>
        <taxon>Metazoa</taxon>
        <taxon>Chordata</taxon>
        <taxon>Craniata</taxon>
        <taxon>Vertebrata</taxon>
        <taxon>Euteleostomi</taxon>
        <taxon>Mammalia</taxon>
        <taxon>Eutheria</taxon>
        <taxon>Laurasiatheria</taxon>
        <taxon>Perissodactyla</taxon>
        <taxon>Equidae</taxon>
        <taxon>Equus</taxon>
    </lineage>
</organism>
<reference key="1">
    <citation type="submission" date="2002-07" db="EMBL/GenBank/DDBJ databases">
        <title>Sequencing of the horse myosin heavy chain isoforms.</title>
        <authorList>
            <person name="Chikuni K."/>
            <person name="Nakajima I."/>
            <person name="Muroya S."/>
        </authorList>
    </citation>
    <scope>NUCLEOTIDE SEQUENCE [MRNA]</scope>
    <source>
        <strain>Thoroughbred</strain>
        <tissue>Skeletal muscle</tissue>
    </source>
</reference>
<accession>Q8MJV1</accession>
<name>MYH2_HORSE</name>
<keyword id="KW-0009">Actin-binding</keyword>
<keyword id="KW-0067">ATP-binding</keyword>
<keyword id="KW-0112">Calmodulin-binding</keyword>
<keyword id="KW-0175">Coiled coil</keyword>
<keyword id="KW-0963">Cytoplasm</keyword>
<keyword id="KW-0488">Methylation</keyword>
<keyword id="KW-0505">Motor protein</keyword>
<keyword id="KW-0514">Muscle protein</keyword>
<keyword id="KW-0518">Myosin</keyword>
<keyword id="KW-0547">Nucleotide-binding</keyword>
<keyword id="KW-0597">Phosphoprotein</keyword>
<keyword id="KW-1185">Reference proteome</keyword>
<keyword id="KW-0787">Thick filament</keyword>
<feature type="chain" id="PRO_0000274167" description="Myosin-2">
    <location>
        <begin position="1"/>
        <end position="1937"/>
    </location>
</feature>
<feature type="domain" description="Myosin N-terminal SH3-like" evidence="10">
    <location>
        <begin position="33"/>
        <end position="82"/>
    </location>
</feature>
<feature type="domain" description="Myosin motor" evidence="9">
    <location>
        <begin position="86"/>
        <end position="780"/>
    </location>
</feature>
<feature type="domain" description="IQ" evidence="8">
    <location>
        <begin position="783"/>
        <end position="812"/>
    </location>
</feature>
<feature type="region of interest" description="Actin-binding" evidence="1">
    <location>
        <begin position="657"/>
        <end position="679"/>
    </location>
</feature>
<feature type="region of interest" description="Actin-binding" evidence="1">
    <location>
        <begin position="759"/>
        <end position="773"/>
    </location>
</feature>
<feature type="region of interest" description="Disordered" evidence="11">
    <location>
        <begin position="1124"/>
        <end position="1145"/>
    </location>
</feature>
<feature type="region of interest" description="Disordered" evidence="11">
    <location>
        <begin position="1151"/>
        <end position="1170"/>
    </location>
</feature>
<feature type="region of interest" description="Disordered" evidence="11">
    <location>
        <begin position="1883"/>
        <end position="1913"/>
    </location>
</feature>
<feature type="coiled-coil region" evidence="7">
    <location>
        <begin position="841"/>
        <end position="1937"/>
    </location>
</feature>
<feature type="compositionally biased region" description="Basic and acidic residues" evidence="11">
    <location>
        <begin position="1126"/>
        <end position="1145"/>
    </location>
</feature>
<feature type="binding site" evidence="7">
    <location>
        <begin position="179"/>
        <end position="186"/>
    </location>
    <ligand>
        <name>ATP</name>
        <dbReference type="ChEBI" id="CHEBI:30616"/>
    </ligand>
</feature>
<feature type="modified residue" description="Phosphothreonine" evidence="5">
    <location>
        <position position="64"/>
    </location>
</feature>
<feature type="modified residue" description="Phosphothreonine" evidence="5">
    <location>
        <position position="69"/>
    </location>
</feature>
<feature type="modified residue" description="N6,N6,N6-trimethyllysine" evidence="7">
    <location>
        <position position="130"/>
    </location>
</feature>
<feature type="modified residue" description="Phosphotyrosine" evidence="5">
    <location>
        <position position="387"/>
    </location>
</feature>
<feature type="modified residue" description="Phosphothreonine" evidence="5">
    <location>
        <position position="417"/>
    </location>
</feature>
<feature type="modified residue" description="Phosphoserine" evidence="5">
    <location>
        <position position="623"/>
    </location>
</feature>
<feature type="modified residue" description="Pros-methylhistidine" evidence="4">
    <location>
        <position position="755"/>
    </location>
</feature>
<feature type="modified residue" description="Phosphoserine" evidence="5">
    <location>
        <position position="1094"/>
    </location>
</feature>
<feature type="modified residue" description="Phosphoserine" evidence="5">
    <location>
        <position position="1160"/>
    </location>
</feature>
<feature type="modified residue" description="Phosphoserine" evidence="5">
    <location>
        <position position="1235"/>
    </location>
</feature>
<feature type="modified residue" description="Phosphothreonine" evidence="5">
    <location>
        <position position="1239"/>
    </location>
</feature>
<feature type="modified residue" description="Phosphoserine" evidence="5">
    <location>
        <position position="1241"/>
    </location>
</feature>
<feature type="modified residue" description="Phosphothreonine" evidence="5">
    <location>
        <position position="1253"/>
    </location>
</feature>
<feature type="modified residue" description="Phosphoserine" evidence="5">
    <location>
        <position position="1259"/>
    </location>
</feature>
<feature type="modified residue" description="Phosphothreonine" evidence="5">
    <location>
        <position position="1284"/>
    </location>
</feature>
<feature type="modified residue" description="Phosphoserine" evidence="5">
    <location>
        <position position="1290"/>
    </location>
</feature>
<feature type="modified residue" description="Phosphoserine" evidence="5">
    <location>
        <position position="1301"/>
    </location>
</feature>
<feature type="modified residue" description="Phosphoserine" evidence="5">
    <location>
        <position position="1304"/>
    </location>
</feature>
<feature type="modified residue" description="Phosphotyrosine" evidence="5">
    <location>
        <position position="1462"/>
    </location>
</feature>
<feature type="modified residue" description="Phosphothreonine" evidence="5">
    <location>
        <position position="1465"/>
    </location>
</feature>
<feature type="modified residue" description="Phosphoserine" evidence="5">
    <location>
        <position position="1472"/>
    </location>
</feature>
<feature type="modified residue" description="Phosphotyrosine" evidence="5">
    <location>
        <position position="1490"/>
    </location>
</feature>
<feature type="modified residue" description="Phosphoserine" evidence="5">
    <location>
        <position position="1493"/>
    </location>
</feature>
<feature type="modified residue" description="Phosphothreonine" evidence="5">
    <location>
        <position position="1499"/>
    </location>
</feature>
<feature type="modified residue" description="Phosphoserine" evidence="5">
    <location>
        <position position="1512"/>
    </location>
</feature>
<feature type="modified residue" description="Phosphothreonine" evidence="5">
    <location>
        <position position="1515"/>
    </location>
</feature>
<feature type="modified residue" description="Phosphoserine" evidence="5">
    <location>
        <position position="1540"/>
    </location>
</feature>
<feature type="modified residue" description="Phosphoserine" evidence="5">
    <location>
        <position position="1552"/>
    </location>
</feature>
<feature type="modified residue" description="Phosphoserine" evidence="5">
    <location>
        <position position="1572"/>
    </location>
</feature>
<feature type="modified residue" description="Phosphoserine" evidence="5">
    <location>
        <position position="1712"/>
    </location>
</feature>
<feature type="modified residue" description="Phosphoserine" evidence="5">
    <location>
        <position position="1724"/>
    </location>
</feature>
<feature type="modified residue" description="Phosphothreonine" evidence="5">
    <location>
        <position position="1728"/>
    </location>
</feature>
<feature type="modified residue" description="Phosphothreonine" evidence="5">
    <location>
        <position position="1734"/>
    </location>
</feature>
<feature type="modified residue" description="Phosphoserine" evidence="5">
    <location>
        <position position="1737"/>
    </location>
</feature>
<gene>
    <name type="primary">MYH2</name>
</gene>